<protein>
    <recommendedName>
        <fullName evidence="1">D-alanyl carrier protein</fullName>
        <shortName evidence="1">DCP</shortName>
    </recommendedName>
    <alternativeName>
        <fullName evidence="1">D-alanine--poly(phosphoribitol) ligase subunit 2</fullName>
    </alternativeName>
</protein>
<gene>
    <name evidence="1" type="primary">dltC</name>
    <name type="ordered locus">SSA_2332</name>
</gene>
<accession>A3CR85</accession>
<comment type="function">
    <text evidence="1">Carrier protein involved in the D-alanylation of lipoteichoic acid (LTA). The loading of thioester-linked D-alanine onto DltC is catalyzed by D-alanine--D-alanyl carrier protein ligase DltA. The DltC-carried D-alanyl group is further transferred to cell membrane phosphatidylglycerol (PG) by forming an ester bond, probably catalyzed by DltD. D-alanylation of LTA plays an important role in modulating the properties of the cell wall in Gram-positive bacteria, influencing the net charge of the cell wall.</text>
</comment>
<comment type="pathway">
    <text evidence="1">Cell wall biogenesis; lipoteichoic acid biosynthesis.</text>
</comment>
<comment type="subcellular location">
    <subcellularLocation>
        <location evidence="1">Cytoplasm</location>
    </subcellularLocation>
</comment>
<comment type="PTM">
    <text evidence="1">4'-phosphopantetheine is transferred from CoA to a specific serine of apo-DCP.</text>
</comment>
<comment type="similarity">
    <text evidence="1">Belongs to the DltC family.</text>
</comment>
<dbReference type="EMBL" id="CP000387">
    <property type="protein sequence ID" value="ABN45690.1"/>
    <property type="molecule type" value="Genomic_DNA"/>
</dbReference>
<dbReference type="RefSeq" id="WP_002894204.1">
    <property type="nucleotide sequence ID" value="NZ_CAXTYR010000005.1"/>
</dbReference>
<dbReference type="RefSeq" id="YP_001036240.1">
    <property type="nucleotide sequence ID" value="NC_009009.1"/>
</dbReference>
<dbReference type="SMR" id="A3CR85"/>
<dbReference type="STRING" id="388919.SSA_2332"/>
<dbReference type="GeneID" id="48426653"/>
<dbReference type="KEGG" id="ssa:SSA_2332"/>
<dbReference type="PATRIC" id="fig|388919.9.peg.2214"/>
<dbReference type="eggNOG" id="COG0236">
    <property type="taxonomic scope" value="Bacteria"/>
</dbReference>
<dbReference type="HOGENOM" id="CLU_108696_19_0_9"/>
<dbReference type="OrthoDB" id="6462171at2"/>
<dbReference type="UniPathway" id="UPA00556"/>
<dbReference type="Proteomes" id="UP000002148">
    <property type="component" value="Chromosome"/>
</dbReference>
<dbReference type="GO" id="GO:0005737">
    <property type="term" value="C:cytoplasm"/>
    <property type="evidence" value="ECO:0007669"/>
    <property type="project" value="UniProtKB-SubCell"/>
</dbReference>
<dbReference type="GO" id="GO:0036370">
    <property type="term" value="F:D-alanyl carrier activity"/>
    <property type="evidence" value="ECO:0007669"/>
    <property type="project" value="UniProtKB-UniRule"/>
</dbReference>
<dbReference type="GO" id="GO:0071555">
    <property type="term" value="P:cell wall organization"/>
    <property type="evidence" value="ECO:0007669"/>
    <property type="project" value="UniProtKB-KW"/>
</dbReference>
<dbReference type="GO" id="GO:0070395">
    <property type="term" value="P:lipoteichoic acid biosynthetic process"/>
    <property type="evidence" value="ECO:0007669"/>
    <property type="project" value="UniProtKB-UniRule"/>
</dbReference>
<dbReference type="Gene3D" id="1.10.1200.10">
    <property type="entry name" value="ACP-like"/>
    <property type="match status" value="1"/>
</dbReference>
<dbReference type="HAMAP" id="MF_00565">
    <property type="entry name" value="DltC"/>
    <property type="match status" value="1"/>
</dbReference>
<dbReference type="InterPro" id="IPR036736">
    <property type="entry name" value="ACP-like_sf"/>
</dbReference>
<dbReference type="InterPro" id="IPR003230">
    <property type="entry name" value="DltC"/>
</dbReference>
<dbReference type="InterPro" id="IPR009081">
    <property type="entry name" value="PP-bd_ACP"/>
</dbReference>
<dbReference type="NCBIfam" id="TIGR01688">
    <property type="entry name" value="dltC"/>
    <property type="match status" value="1"/>
</dbReference>
<dbReference type="NCBIfam" id="NF003464">
    <property type="entry name" value="PRK05087.1"/>
    <property type="match status" value="1"/>
</dbReference>
<dbReference type="Pfam" id="PF00550">
    <property type="entry name" value="PP-binding"/>
    <property type="match status" value="1"/>
</dbReference>
<dbReference type="SUPFAM" id="SSF47336">
    <property type="entry name" value="ACP-like"/>
    <property type="match status" value="1"/>
</dbReference>
<dbReference type="PROSITE" id="PS50075">
    <property type="entry name" value="CARRIER"/>
    <property type="match status" value="1"/>
</dbReference>
<reference key="1">
    <citation type="journal article" date="2007" name="J. Bacteriol.">
        <title>Genome of the opportunistic pathogen Streptococcus sanguinis.</title>
        <authorList>
            <person name="Xu P."/>
            <person name="Alves J.M."/>
            <person name="Kitten T."/>
            <person name="Brown A."/>
            <person name="Chen Z."/>
            <person name="Ozaki L.S."/>
            <person name="Manque P."/>
            <person name="Ge X."/>
            <person name="Serrano M.G."/>
            <person name="Puiu D."/>
            <person name="Hendricks S."/>
            <person name="Wang Y."/>
            <person name="Chaplin M.D."/>
            <person name="Akan D."/>
            <person name="Paik S."/>
            <person name="Peterson D.L."/>
            <person name="Macrina F.L."/>
            <person name="Buck G.A."/>
        </authorList>
    </citation>
    <scope>NUCLEOTIDE SEQUENCE [LARGE SCALE GENOMIC DNA]</scope>
    <source>
        <strain>SK36</strain>
    </source>
</reference>
<feature type="chain" id="PRO_1000024935" description="D-alanyl carrier protein">
    <location>
        <begin position="1"/>
        <end position="79"/>
    </location>
</feature>
<feature type="domain" description="Carrier" evidence="1">
    <location>
        <begin position="1"/>
        <end position="77"/>
    </location>
</feature>
<feature type="modified residue" description="O-(pantetheine 4'-phosphoryl)serine" evidence="1">
    <location>
        <position position="35"/>
    </location>
</feature>
<keyword id="KW-0961">Cell wall biogenesis/degradation</keyword>
<keyword id="KW-0963">Cytoplasm</keyword>
<keyword id="KW-0596">Phosphopantetheine</keyword>
<keyword id="KW-0597">Phosphoprotein</keyword>
<keyword id="KW-1185">Reference proteome</keyword>
<sequence>MDIKAEVIEIIEELFMEDVSDMMDEDLFDAGVLDSMGTVELIVELENRFDIRVPVSEFGRDDWNTANKIVEGVTELRNA</sequence>
<proteinExistence type="inferred from homology"/>
<evidence type="ECO:0000255" key="1">
    <source>
        <dbReference type="HAMAP-Rule" id="MF_00565"/>
    </source>
</evidence>
<name>DLTC_STRSV</name>
<organism>
    <name type="scientific">Streptococcus sanguinis (strain SK36)</name>
    <dbReference type="NCBI Taxonomy" id="388919"/>
    <lineage>
        <taxon>Bacteria</taxon>
        <taxon>Bacillati</taxon>
        <taxon>Bacillota</taxon>
        <taxon>Bacilli</taxon>
        <taxon>Lactobacillales</taxon>
        <taxon>Streptococcaceae</taxon>
        <taxon>Streptococcus</taxon>
    </lineage>
</organism>